<name>RL2_BORBZ</name>
<reference key="1">
    <citation type="journal article" date="2011" name="J. Bacteriol.">
        <title>Whole-genome sequences of thirteen isolates of Borrelia burgdorferi.</title>
        <authorList>
            <person name="Schutzer S.E."/>
            <person name="Fraser-Liggett C.M."/>
            <person name="Casjens S.R."/>
            <person name="Qiu W.G."/>
            <person name="Dunn J.J."/>
            <person name="Mongodin E.F."/>
            <person name="Luft B.J."/>
        </authorList>
    </citation>
    <scope>NUCLEOTIDE SEQUENCE [LARGE SCALE GENOMIC DNA]</scope>
    <source>
        <strain>ZS7</strain>
    </source>
</reference>
<proteinExistence type="inferred from homology"/>
<protein>
    <recommendedName>
        <fullName evidence="1">Large ribosomal subunit protein uL2</fullName>
    </recommendedName>
    <alternativeName>
        <fullName evidence="3">50S ribosomal protein L2</fullName>
    </alternativeName>
</protein>
<evidence type="ECO:0000255" key="1">
    <source>
        <dbReference type="HAMAP-Rule" id="MF_01320"/>
    </source>
</evidence>
<evidence type="ECO:0000256" key="2">
    <source>
        <dbReference type="SAM" id="MobiDB-lite"/>
    </source>
</evidence>
<evidence type="ECO:0000305" key="3"/>
<keyword id="KW-0687">Ribonucleoprotein</keyword>
<keyword id="KW-0689">Ribosomal protein</keyword>
<keyword id="KW-0694">RNA-binding</keyword>
<keyword id="KW-0699">rRNA-binding</keyword>
<feature type="chain" id="PRO_1000141510" description="Large ribosomal subunit protein uL2">
    <location>
        <begin position="1"/>
        <end position="277"/>
    </location>
</feature>
<feature type="region of interest" description="Disordered" evidence="2">
    <location>
        <begin position="32"/>
        <end position="58"/>
    </location>
</feature>
<feature type="region of interest" description="Disordered" evidence="2">
    <location>
        <begin position="225"/>
        <end position="277"/>
    </location>
</feature>
<feature type="compositionally biased region" description="Basic residues" evidence="2">
    <location>
        <begin position="258"/>
        <end position="277"/>
    </location>
</feature>
<accession>B7J246</accession>
<gene>
    <name evidence="1" type="primary">rplB</name>
    <name type="ordered locus">BbuZS7_0492</name>
</gene>
<dbReference type="EMBL" id="CP001205">
    <property type="protein sequence ID" value="ACK74689.1"/>
    <property type="molecule type" value="Genomic_DNA"/>
</dbReference>
<dbReference type="RefSeq" id="WP_002557072.1">
    <property type="nucleotide sequence ID" value="NC_011728.1"/>
</dbReference>
<dbReference type="SMR" id="B7J246"/>
<dbReference type="GeneID" id="56567916"/>
<dbReference type="KEGG" id="bbz:BbuZS7_0492"/>
<dbReference type="HOGENOM" id="CLU_036235_2_1_12"/>
<dbReference type="Proteomes" id="UP000006901">
    <property type="component" value="Chromosome"/>
</dbReference>
<dbReference type="GO" id="GO:0015934">
    <property type="term" value="C:large ribosomal subunit"/>
    <property type="evidence" value="ECO:0007669"/>
    <property type="project" value="InterPro"/>
</dbReference>
<dbReference type="GO" id="GO:0019843">
    <property type="term" value="F:rRNA binding"/>
    <property type="evidence" value="ECO:0007669"/>
    <property type="project" value="UniProtKB-UniRule"/>
</dbReference>
<dbReference type="GO" id="GO:0003735">
    <property type="term" value="F:structural constituent of ribosome"/>
    <property type="evidence" value="ECO:0007669"/>
    <property type="project" value="InterPro"/>
</dbReference>
<dbReference type="GO" id="GO:0016740">
    <property type="term" value="F:transferase activity"/>
    <property type="evidence" value="ECO:0007669"/>
    <property type="project" value="InterPro"/>
</dbReference>
<dbReference type="GO" id="GO:0002181">
    <property type="term" value="P:cytoplasmic translation"/>
    <property type="evidence" value="ECO:0007669"/>
    <property type="project" value="TreeGrafter"/>
</dbReference>
<dbReference type="FunFam" id="2.30.30.30:FF:000001">
    <property type="entry name" value="50S ribosomal protein L2"/>
    <property type="match status" value="1"/>
</dbReference>
<dbReference type="FunFam" id="2.40.50.140:FF:000003">
    <property type="entry name" value="50S ribosomal protein L2"/>
    <property type="match status" value="1"/>
</dbReference>
<dbReference type="FunFam" id="4.10.950.10:FF:000001">
    <property type="entry name" value="50S ribosomal protein L2"/>
    <property type="match status" value="1"/>
</dbReference>
<dbReference type="Gene3D" id="2.30.30.30">
    <property type="match status" value="1"/>
</dbReference>
<dbReference type="Gene3D" id="2.40.50.140">
    <property type="entry name" value="Nucleic acid-binding proteins"/>
    <property type="match status" value="1"/>
</dbReference>
<dbReference type="Gene3D" id="4.10.950.10">
    <property type="entry name" value="Ribosomal protein L2, domain 3"/>
    <property type="match status" value="1"/>
</dbReference>
<dbReference type="HAMAP" id="MF_01320_B">
    <property type="entry name" value="Ribosomal_uL2_B"/>
    <property type="match status" value="1"/>
</dbReference>
<dbReference type="InterPro" id="IPR012340">
    <property type="entry name" value="NA-bd_OB-fold"/>
</dbReference>
<dbReference type="InterPro" id="IPR014722">
    <property type="entry name" value="Rib_uL2_dom2"/>
</dbReference>
<dbReference type="InterPro" id="IPR002171">
    <property type="entry name" value="Ribosomal_uL2"/>
</dbReference>
<dbReference type="InterPro" id="IPR005880">
    <property type="entry name" value="Ribosomal_uL2_bac/org-type"/>
</dbReference>
<dbReference type="InterPro" id="IPR022669">
    <property type="entry name" value="Ribosomal_uL2_C"/>
</dbReference>
<dbReference type="InterPro" id="IPR022671">
    <property type="entry name" value="Ribosomal_uL2_CS"/>
</dbReference>
<dbReference type="InterPro" id="IPR014726">
    <property type="entry name" value="Ribosomal_uL2_dom3"/>
</dbReference>
<dbReference type="InterPro" id="IPR022666">
    <property type="entry name" value="Ribosomal_uL2_RNA-bd_dom"/>
</dbReference>
<dbReference type="InterPro" id="IPR008991">
    <property type="entry name" value="Translation_prot_SH3-like_sf"/>
</dbReference>
<dbReference type="NCBIfam" id="TIGR01171">
    <property type="entry name" value="rplB_bact"/>
    <property type="match status" value="1"/>
</dbReference>
<dbReference type="PANTHER" id="PTHR13691:SF5">
    <property type="entry name" value="LARGE RIBOSOMAL SUBUNIT PROTEIN UL2M"/>
    <property type="match status" value="1"/>
</dbReference>
<dbReference type="PANTHER" id="PTHR13691">
    <property type="entry name" value="RIBOSOMAL PROTEIN L2"/>
    <property type="match status" value="1"/>
</dbReference>
<dbReference type="Pfam" id="PF00181">
    <property type="entry name" value="Ribosomal_L2"/>
    <property type="match status" value="1"/>
</dbReference>
<dbReference type="Pfam" id="PF03947">
    <property type="entry name" value="Ribosomal_L2_C"/>
    <property type="match status" value="1"/>
</dbReference>
<dbReference type="PIRSF" id="PIRSF002158">
    <property type="entry name" value="Ribosomal_L2"/>
    <property type="match status" value="1"/>
</dbReference>
<dbReference type="SMART" id="SM01383">
    <property type="entry name" value="Ribosomal_L2"/>
    <property type="match status" value="1"/>
</dbReference>
<dbReference type="SMART" id="SM01382">
    <property type="entry name" value="Ribosomal_L2_C"/>
    <property type="match status" value="1"/>
</dbReference>
<dbReference type="SUPFAM" id="SSF50249">
    <property type="entry name" value="Nucleic acid-binding proteins"/>
    <property type="match status" value="1"/>
</dbReference>
<dbReference type="SUPFAM" id="SSF50104">
    <property type="entry name" value="Translation proteins SH3-like domain"/>
    <property type="match status" value="1"/>
</dbReference>
<dbReference type="PROSITE" id="PS00467">
    <property type="entry name" value="RIBOSOMAL_L2"/>
    <property type="match status" value="1"/>
</dbReference>
<sequence length="277" mass="30591">MGIKTYKPKTSSLRYKTTLSFDDLSKGNDPLKSLTKGKKFKSGRDSSGRISIRRRGGGHKRKYRLIDFNRRDKFSIPARVASIEYDPNRSANIALLVYKDGEKRYIISPKGIKVGDVLESGPNAPIKIGNALPLENIPIGRTVHNIELNVGKGGQLIRSAGGYAMILASDGNYVTVKLSSGEMRLIFKKCIATIGEIGNEDYANISIGKAGKSRWLGRRPKVRGVAMNPVDHPHGGGEGKTSGGRHPVSPWGQPTKGYKTRKKKRYSDKFIIKRRNK</sequence>
<comment type="function">
    <text evidence="1">One of the primary rRNA binding proteins. Required for association of the 30S and 50S subunits to form the 70S ribosome, for tRNA binding and peptide bond formation. It has been suggested to have peptidyltransferase activity; this is somewhat controversial. Makes several contacts with the 16S rRNA in the 70S ribosome.</text>
</comment>
<comment type="subunit">
    <text evidence="1">Part of the 50S ribosomal subunit. Forms a bridge to the 30S subunit in the 70S ribosome.</text>
</comment>
<comment type="similarity">
    <text evidence="1">Belongs to the universal ribosomal protein uL2 family.</text>
</comment>
<organism>
    <name type="scientific">Borreliella burgdorferi (strain ZS7)</name>
    <name type="common">Borrelia burgdorferi</name>
    <dbReference type="NCBI Taxonomy" id="445985"/>
    <lineage>
        <taxon>Bacteria</taxon>
        <taxon>Pseudomonadati</taxon>
        <taxon>Spirochaetota</taxon>
        <taxon>Spirochaetia</taxon>
        <taxon>Spirochaetales</taxon>
        <taxon>Borreliaceae</taxon>
        <taxon>Borreliella</taxon>
    </lineage>
</organism>